<accession>Q01560</accession>
<accession>D6VT60</accession>
<feature type="chain" id="PRO_0000081676" description="Serine/arginine (SR)-type shuttling mRNA binding protein NPL3">
    <location>
        <begin position="1"/>
        <end position="414"/>
    </location>
</feature>
<feature type="domain" description="RRM 1" evidence="1">
    <location>
        <begin position="125"/>
        <end position="195"/>
    </location>
</feature>
<feature type="domain" description="RRM 2" evidence="1">
    <location>
        <begin position="200"/>
        <end position="275"/>
    </location>
</feature>
<feature type="region of interest" description="Disordered" evidence="2">
    <location>
        <begin position="1"/>
        <end position="119"/>
    </location>
</feature>
<feature type="region of interest" description="Disordered" evidence="2">
    <location>
        <begin position="269"/>
        <end position="299"/>
    </location>
</feature>
<feature type="region of interest" description="Disordered" evidence="2">
    <location>
        <begin position="343"/>
        <end position="414"/>
    </location>
</feature>
<feature type="compositionally biased region" description="Basic and acidic residues" evidence="2">
    <location>
        <begin position="1"/>
        <end position="11"/>
    </location>
</feature>
<feature type="compositionally biased region" description="Low complexity" evidence="2">
    <location>
        <begin position="33"/>
        <end position="51"/>
    </location>
</feature>
<feature type="compositionally biased region" description="Pro residues" evidence="2">
    <location>
        <begin position="52"/>
        <end position="68"/>
    </location>
</feature>
<feature type="compositionally biased region" description="Basic and acidic residues" evidence="2">
    <location>
        <begin position="75"/>
        <end position="92"/>
    </location>
</feature>
<feature type="compositionally biased region" description="Pro residues" evidence="2">
    <location>
        <begin position="93"/>
        <end position="105"/>
    </location>
</feature>
<feature type="compositionally biased region" description="Gly residues" evidence="2">
    <location>
        <begin position="286"/>
        <end position="299"/>
    </location>
</feature>
<feature type="compositionally biased region" description="Low complexity" evidence="2">
    <location>
        <begin position="346"/>
        <end position="360"/>
    </location>
</feature>
<feature type="compositionally biased region" description="Gly residues" evidence="2">
    <location>
        <begin position="379"/>
        <end position="389"/>
    </location>
</feature>
<feature type="compositionally biased region" description="Basic and acidic residues" evidence="2">
    <location>
        <begin position="399"/>
        <end position="414"/>
    </location>
</feature>
<feature type="modified residue" description="Phosphoserine" evidence="14">
    <location>
        <position position="15"/>
    </location>
</feature>
<feature type="modified residue" description="Phosphoserine" evidence="14">
    <location>
        <position position="79"/>
    </location>
</feature>
<feature type="modified residue" description="Phosphoserine" evidence="29">
    <location>
        <position position="182"/>
    </location>
</feature>
<feature type="modified residue" description="Phosphoserine" evidence="14">
    <location>
        <position position="212"/>
    </location>
</feature>
<feature type="modified residue" description="Phosphoserine" evidence="14 28 29 30">
    <location>
        <position position="224"/>
    </location>
</feature>
<feature type="modified residue" description="Dimethylated arginine" evidence="14">
    <location>
        <position position="288"/>
    </location>
</feature>
<feature type="modified residue" description="Dimethylated arginine" evidence="14">
    <location>
        <position position="290"/>
    </location>
</feature>
<feature type="modified residue" description="Dimethylated arginine" evidence="14">
    <location>
        <position position="294"/>
    </location>
</feature>
<feature type="modified residue" description="Dimethylated arginine" evidence="14">
    <location>
        <position position="298"/>
    </location>
</feature>
<feature type="modified residue" description="Omega-N-methylarginine" evidence="14">
    <location>
        <position position="302"/>
    </location>
</feature>
<feature type="modified residue" description="Dimethylated arginine; alternate" evidence="12 14">
    <location>
        <position position="307"/>
    </location>
</feature>
<feature type="modified residue" description="Omega-N-methylarginine; alternate" evidence="11 12 14">
    <location>
        <position position="307"/>
    </location>
</feature>
<feature type="modified residue" description="Dimethylated arginine; alternate" evidence="14">
    <location>
        <position position="314"/>
    </location>
</feature>
<feature type="modified residue" description="Omega-N-methylarginine; alternate" evidence="11 12 14">
    <location>
        <position position="314"/>
    </location>
</feature>
<feature type="modified residue" description="Omega-N-methylarginine" evidence="11 12">
    <location>
        <position position="321"/>
    </location>
</feature>
<feature type="modified residue" description="Omega-N-methylarginine" evidence="11">
    <location>
        <position position="329"/>
    </location>
</feature>
<feature type="modified residue" description="Omega-N-methylarginine" evidence="11">
    <location>
        <position position="337"/>
    </location>
</feature>
<feature type="modified residue" description="Omega-N-methylarginine" evidence="11 14">
    <location>
        <position position="344"/>
    </location>
</feature>
<feature type="modified residue" description="Dimethylated arginine; alternate" evidence="14">
    <location>
        <position position="351"/>
    </location>
</feature>
<feature type="modified residue" description="Omega-N-methylarginine; alternate" evidence="11 14">
    <location>
        <position position="351"/>
    </location>
</feature>
<feature type="modified residue" description="Phosphoserine" evidence="14">
    <location>
        <position position="356"/>
    </location>
</feature>
<feature type="modified residue" description="Dimethylated arginine; alternate" evidence="14">
    <location>
        <position position="358"/>
    </location>
</feature>
<feature type="modified residue" description="Omega-N-methylarginine; alternate" evidence="11 14">
    <location>
        <position position="358"/>
    </location>
</feature>
<feature type="modified residue" description="Dimethylated arginine; alternate" evidence="14">
    <location>
        <position position="363"/>
    </location>
</feature>
<feature type="modified residue" description="Omega-N-methylarginine; alternate" evidence="11 14">
    <location>
        <position position="363"/>
    </location>
</feature>
<feature type="modified residue" description="Dimethylated arginine; alternate" evidence="14">
    <location>
        <position position="377"/>
    </location>
</feature>
<feature type="modified residue" description="Omega-N-methylarginine; alternate" evidence="11 14">
    <location>
        <position position="377"/>
    </location>
</feature>
<feature type="modified residue" description="Dimethylated arginine; alternate" evidence="14">
    <location>
        <position position="384"/>
    </location>
</feature>
<feature type="modified residue" description="Omega-N-methylarginine; alternate" evidence="11 14">
    <location>
        <position position="384"/>
    </location>
</feature>
<feature type="modified residue" description="Omega-N-methylarginine" evidence="11 14">
    <location>
        <position position="391"/>
    </location>
</feature>
<feature type="mutagenesis site" description="Shifts localization of the protein to the cytoplasm at steady state." evidence="8">
    <original>S</original>
    <variation>A</variation>
    <location>
        <position position="411"/>
    </location>
</feature>
<feature type="strand" evidence="31">
    <location>
        <begin position="125"/>
        <end position="129"/>
    </location>
</feature>
<feature type="helix" evidence="31">
    <location>
        <begin position="138"/>
        <end position="145"/>
    </location>
</feature>
<feature type="turn" evidence="31">
    <location>
        <begin position="146"/>
        <end position="148"/>
    </location>
</feature>
<feature type="strand" evidence="31">
    <location>
        <begin position="153"/>
        <end position="157"/>
    </location>
</feature>
<feature type="strand" evidence="31">
    <location>
        <begin position="160"/>
        <end position="164"/>
    </location>
</feature>
<feature type="helix" evidence="31">
    <location>
        <begin position="168"/>
        <end position="178"/>
    </location>
</feature>
<feature type="strand" evidence="33">
    <location>
        <begin position="181"/>
        <end position="187"/>
    </location>
</feature>
<feature type="strand" evidence="31">
    <location>
        <begin position="189"/>
        <end position="192"/>
    </location>
</feature>
<feature type="strand" evidence="32">
    <location>
        <begin position="200"/>
        <end position="205"/>
    </location>
</feature>
<feature type="strand" evidence="33">
    <location>
        <begin position="208"/>
        <end position="210"/>
    </location>
</feature>
<feature type="helix" evidence="32">
    <location>
        <begin position="213"/>
        <end position="223"/>
    </location>
</feature>
<feature type="strand" evidence="32">
    <location>
        <begin position="228"/>
        <end position="231"/>
    </location>
</feature>
<feature type="strand" evidence="32">
    <location>
        <begin position="236"/>
        <end position="238"/>
    </location>
</feature>
<feature type="strand" evidence="32">
    <location>
        <begin position="241"/>
        <end position="247"/>
    </location>
</feature>
<feature type="helix" evidence="32">
    <location>
        <begin position="248"/>
        <end position="257"/>
    </location>
</feature>
<feature type="strand" evidence="33">
    <location>
        <begin position="258"/>
        <end position="260"/>
    </location>
</feature>
<feature type="strand" evidence="32">
    <location>
        <begin position="261"/>
        <end position="263"/>
    </location>
</feature>
<feature type="strand" evidence="32">
    <location>
        <begin position="266"/>
        <end position="273"/>
    </location>
</feature>
<reference key="1">
    <citation type="journal article" date="1992" name="J. Cell Biol.">
        <title>NOP3 is an essential yeast protein which is required for pre-rRNA processing.</title>
        <authorList>
            <person name="Russell I.D."/>
            <person name="Tollervey D."/>
        </authorList>
    </citation>
    <scope>NUCLEOTIDE SEQUENCE [GENOMIC DNA]</scope>
    <scope>FUNCTION</scope>
</reference>
<reference key="2">
    <citation type="journal article" date="1992" name="Mol. Biol. Cell">
        <title>A mutant nuclear protein with similarity to RNA binding proteins interferes with nuclear import in yeast.</title>
        <authorList>
            <person name="Bossie M.A."/>
            <person name="Dehoratious C."/>
            <person name="Barcelo G."/>
            <person name="Silver P."/>
        </authorList>
    </citation>
    <scope>NUCLEOTIDE SEQUENCE [GENOMIC DNA]</scope>
</reference>
<reference key="3">
    <citation type="journal article" date="1993" name="Gene">
        <title>The Saccharomyces cerevisiae MTS1 gene encodes a putative RNA-binding protein involved in mitochondrial protein targeting.</title>
        <authorList>
            <person name="Ellis E.M."/>
            <person name="Reid G.A."/>
        </authorList>
    </citation>
    <scope>NUCLEOTIDE SEQUENCE [GENOMIC DNA]</scope>
</reference>
<reference key="4">
    <citation type="journal article" date="1997" name="Nature">
        <title>The nucleotide sequence of Saccharomyces cerevisiae chromosome IV.</title>
        <authorList>
            <person name="Jacq C."/>
            <person name="Alt-Moerbe J."/>
            <person name="Andre B."/>
            <person name="Arnold W."/>
            <person name="Bahr A."/>
            <person name="Ballesta J.P.G."/>
            <person name="Bargues M."/>
            <person name="Baron L."/>
            <person name="Becker A."/>
            <person name="Biteau N."/>
            <person name="Bloecker H."/>
            <person name="Blugeon C."/>
            <person name="Boskovic J."/>
            <person name="Brandt P."/>
            <person name="Brueckner M."/>
            <person name="Buitrago M.J."/>
            <person name="Coster F."/>
            <person name="Delaveau T."/>
            <person name="del Rey F."/>
            <person name="Dujon B."/>
            <person name="Eide L.G."/>
            <person name="Garcia-Cantalejo J.M."/>
            <person name="Goffeau A."/>
            <person name="Gomez-Peris A."/>
            <person name="Granotier C."/>
            <person name="Hanemann V."/>
            <person name="Hankeln T."/>
            <person name="Hoheisel J.D."/>
            <person name="Jaeger W."/>
            <person name="Jimenez A."/>
            <person name="Jonniaux J.-L."/>
            <person name="Kraemer C."/>
            <person name="Kuester H."/>
            <person name="Laamanen P."/>
            <person name="Legros Y."/>
            <person name="Louis E.J."/>
            <person name="Moeller-Rieker S."/>
            <person name="Monnet A."/>
            <person name="Moro M."/>
            <person name="Mueller-Auer S."/>
            <person name="Nussbaumer B."/>
            <person name="Paricio N."/>
            <person name="Paulin L."/>
            <person name="Perea J."/>
            <person name="Perez-Alonso M."/>
            <person name="Perez-Ortin J.E."/>
            <person name="Pohl T.M."/>
            <person name="Prydz H."/>
            <person name="Purnelle B."/>
            <person name="Rasmussen S.W."/>
            <person name="Remacha M.A."/>
            <person name="Revuelta J.L."/>
            <person name="Rieger M."/>
            <person name="Salom D."/>
            <person name="Saluz H.P."/>
            <person name="Saiz J.E."/>
            <person name="Saren A.-M."/>
            <person name="Schaefer M."/>
            <person name="Scharfe M."/>
            <person name="Schmidt E.R."/>
            <person name="Schneider C."/>
            <person name="Scholler P."/>
            <person name="Schwarz S."/>
            <person name="Soler-Mira A."/>
            <person name="Urrestarazu L.A."/>
            <person name="Verhasselt P."/>
            <person name="Vissers S."/>
            <person name="Voet M."/>
            <person name="Volckaert G."/>
            <person name="Wagner G."/>
            <person name="Wambutt R."/>
            <person name="Wedler E."/>
            <person name="Wedler H."/>
            <person name="Woelfl S."/>
            <person name="Harris D.E."/>
            <person name="Bowman S."/>
            <person name="Brown D."/>
            <person name="Churcher C.M."/>
            <person name="Connor R."/>
            <person name="Dedman K."/>
            <person name="Gentles S."/>
            <person name="Hamlin N."/>
            <person name="Hunt S."/>
            <person name="Jones L."/>
            <person name="McDonald S."/>
            <person name="Murphy L.D."/>
            <person name="Niblett D."/>
            <person name="Odell C."/>
            <person name="Oliver K."/>
            <person name="Rajandream M.A."/>
            <person name="Richards C."/>
            <person name="Shore L."/>
            <person name="Walsh S.V."/>
            <person name="Barrell B.G."/>
            <person name="Dietrich F.S."/>
            <person name="Mulligan J.T."/>
            <person name="Allen E."/>
            <person name="Araujo R."/>
            <person name="Aviles E."/>
            <person name="Berno A."/>
            <person name="Carpenter J."/>
            <person name="Chen E."/>
            <person name="Cherry J.M."/>
            <person name="Chung E."/>
            <person name="Duncan M."/>
            <person name="Hunicke-Smith S."/>
            <person name="Hyman R.W."/>
            <person name="Komp C."/>
            <person name="Lashkari D."/>
            <person name="Lew H."/>
            <person name="Lin D."/>
            <person name="Mosedale D."/>
            <person name="Nakahara K."/>
            <person name="Namath A."/>
            <person name="Oefner P."/>
            <person name="Oh C."/>
            <person name="Petel F.X."/>
            <person name="Roberts D."/>
            <person name="Schramm S."/>
            <person name="Schroeder M."/>
            <person name="Shogren T."/>
            <person name="Shroff N."/>
            <person name="Winant A."/>
            <person name="Yelton M.A."/>
            <person name="Botstein D."/>
            <person name="Davis R.W."/>
            <person name="Johnston M."/>
            <person name="Andrews S."/>
            <person name="Brinkman R."/>
            <person name="Cooper J."/>
            <person name="Ding H."/>
            <person name="Du Z."/>
            <person name="Favello A."/>
            <person name="Fulton L."/>
            <person name="Gattung S."/>
            <person name="Greco T."/>
            <person name="Hallsworth K."/>
            <person name="Hawkins J."/>
            <person name="Hillier L.W."/>
            <person name="Jier M."/>
            <person name="Johnson D."/>
            <person name="Johnston L."/>
            <person name="Kirsten J."/>
            <person name="Kucaba T."/>
            <person name="Langston Y."/>
            <person name="Latreille P."/>
            <person name="Le T."/>
            <person name="Mardis E."/>
            <person name="Menezes S."/>
            <person name="Miller N."/>
            <person name="Nhan M."/>
            <person name="Pauley A."/>
            <person name="Peluso D."/>
            <person name="Rifkin L."/>
            <person name="Riles L."/>
            <person name="Taich A."/>
            <person name="Trevaskis E."/>
            <person name="Vignati D."/>
            <person name="Wilcox L."/>
            <person name="Wohldman P."/>
            <person name="Vaudin M."/>
            <person name="Wilson R."/>
            <person name="Waterston R."/>
            <person name="Albermann K."/>
            <person name="Hani J."/>
            <person name="Heumann K."/>
            <person name="Kleine K."/>
            <person name="Mewes H.-W."/>
            <person name="Zollner A."/>
            <person name="Zaccaria P."/>
        </authorList>
    </citation>
    <scope>NUCLEOTIDE SEQUENCE [LARGE SCALE GENOMIC DNA]</scope>
    <source>
        <strain>ATCC 204508 / S288c</strain>
    </source>
</reference>
<reference key="5">
    <citation type="journal article" date="2014" name="G3 (Bethesda)">
        <title>The reference genome sequence of Saccharomyces cerevisiae: Then and now.</title>
        <authorList>
            <person name="Engel S.R."/>
            <person name="Dietrich F.S."/>
            <person name="Fisk D.G."/>
            <person name="Binkley G."/>
            <person name="Balakrishnan R."/>
            <person name="Costanzo M.C."/>
            <person name="Dwight S.S."/>
            <person name="Hitz B.C."/>
            <person name="Karra K."/>
            <person name="Nash R.S."/>
            <person name="Weng S."/>
            <person name="Wong E.D."/>
            <person name="Lloyd P."/>
            <person name="Skrzypek M.S."/>
            <person name="Miyasato S.R."/>
            <person name="Simison M."/>
            <person name="Cherry J.M."/>
        </authorList>
    </citation>
    <scope>GENOME REANNOTATION</scope>
    <source>
        <strain>ATCC 204508 / S288c</strain>
    </source>
</reference>
<reference key="6">
    <citation type="journal article" date="1994" name="J. Cell Biol.">
        <title>Characterization of nuclear polyadenylated RNA-binding proteins in Saccharomyces cerevisiae.</title>
        <authorList>
            <person name="Wilson S.M."/>
            <person name="Datar K.V."/>
            <person name="Paddy M.R."/>
            <person name="Swedlow J.R."/>
            <person name="Swanson M.S."/>
        </authorList>
    </citation>
    <scope>SUBCELLULAR LOCATION</scope>
    <scope>BINDING TO POLYADENYLATED RNA</scope>
</reference>
<reference key="7">
    <citation type="journal article" date="1996" name="Genes Dev.">
        <title>A protein that shuttles between the nucleus and the cytoplasm is an important mediator of RNA export.</title>
        <authorList>
            <person name="Lee M.S."/>
            <person name="Henry M."/>
            <person name="Silver P.A."/>
        </authorList>
    </citation>
    <scope>FUNCTION</scope>
</reference>
<reference key="8">
    <citation type="journal article" date="1998" name="Genes Dev.">
        <title>Arginine methylation facilitates the nuclear export of hnRNP proteins.</title>
        <authorList>
            <person name="Shen E.C."/>
            <person name="Henry M.F."/>
            <person name="Weiss V.H."/>
            <person name="Valentini S.R."/>
            <person name="Silver P.A."/>
            <person name="Lee M.S."/>
        </authorList>
    </citation>
    <scope>SUBCELLULAR LOCATION</scope>
    <scope>METHYLATION BY HMT1</scope>
</reference>
<reference key="9">
    <citation type="journal article" date="2000" name="Mol. Cell. Biol.">
        <title>A nuclear 3'-5' exonuclease involved in mRNA degradation interacts with Poly(A) polymerase and the hnRNA protein Npl3p.</title>
        <authorList>
            <person name="Burkard K.T.D."/>
            <person name="Butler J.S."/>
        </authorList>
    </citation>
    <scope>INTERACTION WITH RRP6</scope>
</reference>
<reference key="10">
    <citation type="journal article" date="2003" name="Nature">
        <title>Global analysis of protein localization in budding yeast.</title>
        <authorList>
            <person name="Huh W.-K."/>
            <person name="Falvo J.V."/>
            <person name="Gerke L.C."/>
            <person name="Carroll A.S."/>
            <person name="Howson R.W."/>
            <person name="Weissman J.S."/>
            <person name="O'Shea E.K."/>
        </authorList>
    </citation>
    <scope>SUBCELLULAR LOCATION [LARGE SCALE ANALYSIS]</scope>
</reference>
<reference key="11">
    <citation type="journal article" date="2003" name="Nature">
        <title>Global analysis of protein expression in yeast.</title>
        <authorList>
            <person name="Ghaemmaghami S."/>
            <person name="Huh W.-K."/>
            <person name="Bower K."/>
            <person name="Howson R.W."/>
            <person name="Belle A."/>
            <person name="Dephoure N."/>
            <person name="O'Shea E.K."/>
            <person name="Weissman J.S."/>
        </authorList>
    </citation>
    <scope>LEVEL OF PROTEIN EXPRESSION [LARGE SCALE ANALYSIS]</scope>
</reference>
<reference key="12">
    <citation type="journal article" date="2004" name="J. Biol. Chem.">
        <title>Differential export requirements for shuttling serine/arginine-type mRNA-binding proteins.</title>
        <authorList>
            <person name="Haecker S."/>
            <person name="Krebber H."/>
        </authorList>
    </citation>
    <scope>SUBCELLULAR LOCATION</scope>
    <scope>MUTAGENESIS OF SER-411</scope>
</reference>
<reference key="13">
    <citation type="journal article" date="2004" name="Mol. Cell. Biol.">
        <title>Yeast shuttling SR proteins Npl3p, Gbp2p, and Hrb1p are part of the translating mRNPs, and Npl3p can function as a translational repressor.</title>
        <authorList>
            <person name="Windgassen M."/>
            <person name="Sturm D."/>
            <person name="Cajigas I.J."/>
            <person name="Gonzalez C.I."/>
            <person name="Seedorf M."/>
            <person name="Bastians H."/>
            <person name="Krebber H."/>
        </authorList>
    </citation>
    <scope>FUNCTION</scope>
    <scope>SUBCELLULAR LOCATION</scope>
</reference>
<reference key="14">
    <citation type="journal article" date="2007" name="J. Proteome Res.">
        <title>Large-scale phosphorylation analysis of alpha-factor-arrested Saccharomyces cerevisiae.</title>
        <authorList>
            <person name="Li X."/>
            <person name="Gerber S.A."/>
            <person name="Rudner A.D."/>
            <person name="Beausoleil S.A."/>
            <person name="Haas W."/>
            <person name="Villen J."/>
            <person name="Elias J.E."/>
            <person name="Gygi S.P."/>
        </authorList>
    </citation>
    <scope>PHOSPHORYLATION [LARGE SCALE ANALYSIS] AT SER-224</scope>
    <scope>IDENTIFICATION BY MASS SPECTROMETRY [LARGE SCALE ANALYSIS]</scope>
    <source>
        <strain>ADR376</strain>
    </source>
</reference>
<reference key="15">
    <citation type="journal article" date="2008" name="Mol. Cell">
        <title>A single SR-like protein, Npl3, promotes pre-mRNA splicing in budding yeast.</title>
        <authorList>
            <person name="Kress T.L."/>
            <person name="Krogan N.J."/>
            <person name="Guthrie C."/>
        </authorList>
    </citation>
    <scope>FUNCTION</scope>
</reference>
<reference key="16">
    <citation type="journal article" date="2008" name="Mol. Cell. Proteomics">
        <title>A multidimensional chromatography technology for in-depth phosphoproteome analysis.</title>
        <authorList>
            <person name="Albuquerque C.P."/>
            <person name="Smolka M.B."/>
            <person name="Payne S.H."/>
            <person name="Bafna V."/>
            <person name="Eng J."/>
            <person name="Zhou H."/>
        </authorList>
    </citation>
    <scope>PHOSPHORYLATION [LARGE SCALE ANALYSIS] AT SER-182 AND SER-224</scope>
    <scope>IDENTIFICATION BY MASS SPECTROMETRY [LARGE SCALE ANALYSIS]</scope>
</reference>
<reference key="17">
    <citation type="journal article" date="2009" name="Science">
        <title>Global analysis of Cdk1 substrate phosphorylation sites provides insights into evolution.</title>
        <authorList>
            <person name="Holt L.J."/>
            <person name="Tuch B.B."/>
            <person name="Villen J."/>
            <person name="Johnson A.D."/>
            <person name="Gygi S.P."/>
            <person name="Morgan D.O."/>
        </authorList>
    </citation>
    <scope>PHOSPHORYLATION [LARGE SCALE ANALYSIS] AT SER-224</scope>
    <scope>IDENTIFICATION BY MASS SPECTROMETRY [LARGE SCALE ANALYSIS]</scope>
</reference>
<reference key="18">
    <citation type="journal article" date="2012" name="PLoS Genet.">
        <title>The yeast SR-like protein Npl3 links chromatin modification to mRNA processing.</title>
        <authorList>
            <person name="Moehle E.A."/>
            <person name="Ryan C.J."/>
            <person name="Krogan N.J."/>
            <person name="Kress T.L."/>
            <person name="Guthrie C."/>
        </authorList>
    </citation>
    <scope>FUNCTION</scope>
</reference>
<reference key="19">
    <citation type="journal article" date="2015" name="Proteomics">
        <title>Yeast proteins Gar1p, Nop1p, Npl3p, Nsr1p, and Rps2p are natively methylated and are substrates of the arginine methyltransferase Hmt1p.</title>
        <authorList>
            <person name="Yagoub D."/>
            <person name="Hart-Smith G."/>
            <person name="Moecking J."/>
            <person name="Erce M.A."/>
            <person name="Wilkins M.R."/>
        </authorList>
    </citation>
    <scope>METHYLATION AT ARG-307; ARG-314 AND ARG-321</scope>
</reference>
<reference key="20">
    <citation type="journal article" date="2015" name="Proteomics">
        <title>Expanding the yeast protein arginine methylome.</title>
        <authorList>
            <person name="Plank M."/>
            <person name="Fischer R."/>
            <person name="Geoghegan V."/>
            <person name="Charles P.D."/>
            <person name="Konietzny R."/>
            <person name="Acuto O."/>
            <person name="Pears C."/>
            <person name="Schofield C.J."/>
            <person name="Kessler B.M."/>
        </authorList>
    </citation>
    <scope>METHYLATION AT ARG-307; ARG-314; ARG-321; ARG-329; ARG-337; ARG-344; ARG-351; ARG-358; ARG-363; ARG-377; ARG-384 AND ARG-391</scope>
</reference>
<reference key="21">
    <citation type="journal article" date="2016" name="Cell">
        <title>ATPase-modulated stress granules contain a diverse proteome and substructure.</title>
        <authorList>
            <person name="Jain S."/>
            <person name="Wheeler J.R."/>
            <person name="Walters R.W."/>
            <person name="Agrawal A."/>
            <person name="Barsic A."/>
            <person name="Parker R."/>
        </authorList>
    </citation>
    <scope>SUBCELLULAR LOCATION</scope>
</reference>
<reference key="22">
    <citation type="journal article" date="2021" name="J. Proteome Res.">
        <title>Discovery of arginine methylation, phosphorylation, and their co-occurrence in condensate-associated proteins in Saccharomyces cerevisiae.</title>
        <authorList>
            <person name="Hamey J.J."/>
            <person name="Nguyen A."/>
            <person name="Wilkins M.R."/>
        </authorList>
    </citation>
    <scope>METHYLATION AT ARG-288; ARG-290; ARG-294; ARG-298; ARG-302; ARG-307; ARG-314; ARG-344; ARG-351; ARG-358; ARG-363; ARG-377; ARG-384 AND ARG-391</scope>
    <scope>PHOSPHORYLATION AT SER-15; SER-79; SER-212; SER-224 AND SER-356</scope>
</reference>
<reference evidence="23" key="23">
    <citation type="journal article" date="2007" name="J. Mol. Biol.">
        <title>The RGG domain of Npl3p recruits Sky1p through docking interactions.</title>
        <authorList>
            <person name="Lukasiewicz R."/>
            <person name="Nolen B."/>
            <person name="Adams J.A."/>
            <person name="Ghosh G."/>
        </authorList>
    </citation>
    <scope>X-RAY CRYSTALLOGRAPHY (2.50 ANGSTROMS) OF 408-414</scope>
</reference>
<reference evidence="26 27" key="24">
    <citation type="journal article" date="2008" name="J. Mol. Biol.">
        <title>Structure of the yeast SR protein Npl3 and Interaction with mRNA 3'-end processing signals.</title>
        <authorList>
            <person name="Deka P."/>
            <person name="Bucheli M.E."/>
            <person name="Moore C."/>
            <person name="Buratowski S."/>
            <person name="Varani G."/>
        </authorList>
    </citation>
    <scope>STRUCTURE BY NMR OF 194-280</scope>
</reference>
<reference evidence="24 25" key="25">
    <citation type="journal article" date="2008" name="J. Mol. Biol.">
        <title>Improved segmental isotope labeling methods for the NMR study of multidomain or large proteins: application to the RRMs of Npl3p and hnRNP L.</title>
        <authorList>
            <person name="Skrisovska L."/>
            <person name="Allain F.H."/>
        </authorList>
    </citation>
    <scope>STRUCTURE BY NMR OF 193-282</scope>
</reference>
<dbReference type="EMBL" id="X66019">
    <property type="protein sequence ID" value="CAA46817.1"/>
    <property type="molecule type" value="Genomic_DNA"/>
</dbReference>
<dbReference type="EMBL" id="M86731">
    <property type="protein sequence ID" value="AAA34818.1"/>
    <property type="molecule type" value="Genomic_DNA"/>
</dbReference>
<dbReference type="EMBL" id="X70951">
    <property type="protein sequence ID" value="CAA50291.1"/>
    <property type="molecule type" value="Genomic_DNA"/>
</dbReference>
<dbReference type="EMBL" id="U33007">
    <property type="protein sequence ID" value="AAB64865.1"/>
    <property type="molecule type" value="Genomic_DNA"/>
</dbReference>
<dbReference type="EMBL" id="BK006938">
    <property type="protein sequence ID" value="DAA12270.1"/>
    <property type="molecule type" value="Genomic_DNA"/>
</dbReference>
<dbReference type="PIR" id="JN0866">
    <property type="entry name" value="JN0866"/>
</dbReference>
<dbReference type="RefSeq" id="NP_010720.3">
    <property type="nucleotide sequence ID" value="NM_001180740.3"/>
</dbReference>
<dbReference type="PDB" id="2JD5">
    <property type="method" value="X-ray"/>
    <property type="resolution" value="2.50 A"/>
    <property type="chains" value="C=408-414"/>
</dbReference>
<dbReference type="PDB" id="2JVO">
    <property type="method" value="NMR"/>
    <property type="chains" value="A=116-201"/>
</dbReference>
<dbReference type="PDB" id="2JVR">
    <property type="method" value="NMR"/>
    <property type="chains" value="A=193-282"/>
</dbReference>
<dbReference type="PDB" id="2OSQ">
    <property type="method" value="NMR"/>
    <property type="chains" value="A=121-194"/>
</dbReference>
<dbReference type="PDB" id="2OSR">
    <property type="method" value="NMR"/>
    <property type="chains" value="A=194-280"/>
</dbReference>
<dbReference type="PDB" id="7QDD">
    <property type="method" value="NMR"/>
    <property type="chains" value="B=114-201"/>
</dbReference>
<dbReference type="PDB" id="7QDE">
    <property type="method" value="NMR"/>
    <property type="chains" value="B=114-282"/>
</dbReference>
<dbReference type="PDB" id="8B8S">
    <property type="method" value="Other"/>
    <property type="chains" value="A=120-280"/>
</dbReference>
<dbReference type="PDBsum" id="2JD5"/>
<dbReference type="PDBsum" id="2JVO"/>
<dbReference type="PDBsum" id="2JVR"/>
<dbReference type="PDBsum" id="2OSQ"/>
<dbReference type="PDBsum" id="2OSR"/>
<dbReference type="PDBsum" id="7QDD"/>
<dbReference type="PDBsum" id="7QDE"/>
<dbReference type="PDBsum" id="8B8S"/>
<dbReference type="BMRB" id="Q01560"/>
<dbReference type="SASBDB" id="Q01560"/>
<dbReference type="SMR" id="Q01560"/>
<dbReference type="BioGRID" id="32489">
    <property type="interactions" value="1216"/>
</dbReference>
<dbReference type="DIP" id="DIP-6464N"/>
<dbReference type="FunCoup" id="Q01560">
    <property type="interactions" value="569"/>
</dbReference>
<dbReference type="IntAct" id="Q01560">
    <property type="interactions" value="83"/>
</dbReference>
<dbReference type="MINT" id="Q01560"/>
<dbReference type="STRING" id="4932.YDR432W"/>
<dbReference type="iPTMnet" id="Q01560"/>
<dbReference type="PaxDb" id="4932-YDR432W"/>
<dbReference type="PeptideAtlas" id="Q01560"/>
<dbReference type="EnsemblFungi" id="YDR432W_mRNA">
    <property type="protein sequence ID" value="YDR432W"/>
    <property type="gene ID" value="YDR432W"/>
</dbReference>
<dbReference type="GeneID" id="852042"/>
<dbReference type="KEGG" id="sce:YDR432W"/>
<dbReference type="AGR" id="SGD:S000002840"/>
<dbReference type="SGD" id="S000002840">
    <property type="gene designation" value="NPL3"/>
</dbReference>
<dbReference type="VEuPathDB" id="FungiDB:YDR432W"/>
<dbReference type="eggNOG" id="KOG0106">
    <property type="taxonomic scope" value="Eukaryota"/>
</dbReference>
<dbReference type="HOGENOM" id="CLU_054994_1_0_1"/>
<dbReference type="InParanoid" id="Q01560"/>
<dbReference type="OMA" id="PREPAYP"/>
<dbReference type="OrthoDB" id="1099063at2759"/>
<dbReference type="BioCyc" id="YEAST:G3O-29970-MONOMER"/>
<dbReference type="BioGRID-ORCS" id="852042">
    <property type="hits" value="4 hits in 10 CRISPR screens"/>
</dbReference>
<dbReference type="CD-CODE" id="E03F929F">
    <property type="entry name" value="Stress granule"/>
</dbReference>
<dbReference type="EvolutionaryTrace" id="Q01560"/>
<dbReference type="PRO" id="PR:Q01560"/>
<dbReference type="Proteomes" id="UP000002311">
    <property type="component" value="Chromosome IV"/>
</dbReference>
<dbReference type="RNAct" id="Q01560">
    <property type="molecule type" value="protein"/>
</dbReference>
<dbReference type="GO" id="GO:0005737">
    <property type="term" value="C:cytoplasm"/>
    <property type="evidence" value="ECO:0000315"/>
    <property type="project" value="SGD"/>
</dbReference>
<dbReference type="GO" id="GO:0010494">
    <property type="term" value="C:cytoplasmic stress granule"/>
    <property type="evidence" value="ECO:0007005"/>
    <property type="project" value="SGD"/>
</dbReference>
<dbReference type="GO" id="GO:0005634">
    <property type="term" value="C:nucleus"/>
    <property type="evidence" value="ECO:0000314"/>
    <property type="project" value="SGD"/>
</dbReference>
<dbReference type="GO" id="GO:1990904">
    <property type="term" value="C:ribonucleoprotein complex"/>
    <property type="evidence" value="ECO:0007669"/>
    <property type="project" value="UniProtKB-KW"/>
</dbReference>
<dbReference type="GO" id="GO:0003691">
    <property type="term" value="F:double-stranded telomeric DNA binding"/>
    <property type="evidence" value="ECO:0000314"/>
    <property type="project" value="SGD"/>
</dbReference>
<dbReference type="GO" id="GO:0031370">
    <property type="term" value="F:eukaryotic initiation factor 4G binding"/>
    <property type="evidence" value="ECO:0000314"/>
    <property type="project" value="SGD"/>
</dbReference>
<dbReference type="GO" id="GO:0042802">
    <property type="term" value="F:identical protein binding"/>
    <property type="evidence" value="ECO:0000353"/>
    <property type="project" value="IntAct"/>
</dbReference>
<dbReference type="GO" id="GO:0003729">
    <property type="term" value="F:mRNA binding"/>
    <property type="evidence" value="ECO:0000314"/>
    <property type="project" value="SGD"/>
</dbReference>
<dbReference type="GO" id="GO:0008143">
    <property type="term" value="F:poly(A) binding"/>
    <property type="evidence" value="ECO:0000314"/>
    <property type="project" value="SGD"/>
</dbReference>
<dbReference type="GO" id="GO:0000993">
    <property type="term" value="F:RNA polymerase II complex binding"/>
    <property type="evidence" value="ECO:0000353"/>
    <property type="project" value="SGD"/>
</dbReference>
<dbReference type="GO" id="GO:0061752">
    <property type="term" value="F:telomeric repeat-containing RNA binding"/>
    <property type="evidence" value="ECO:0000314"/>
    <property type="project" value="SGD"/>
</dbReference>
<dbReference type="GO" id="GO:0000398">
    <property type="term" value="P:mRNA splicing, via spliceosome"/>
    <property type="evidence" value="ECO:0000315"/>
    <property type="project" value="SGD"/>
</dbReference>
<dbReference type="GO" id="GO:2000805">
    <property type="term" value="P:negative regulation of termination of RNA polymerase II transcription, poly(A)-coupled"/>
    <property type="evidence" value="ECO:0000314"/>
    <property type="project" value="SGD"/>
</dbReference>
<dbReference type="GO" id="GO:0017148">
    <property type="term" value="P:negative regulation of translation"/>
    <property type="evidence" value="ECO:0000314"/>
    <property type="project" value="SGD"/>
</dbReference>
<dbReference type="GO" id="GO:0032968">
    <property type="term" value="P:positive regulation of transcription elongation by RNA polymerase II"/>
    <property type="evidence" value="ECO:0000314"/>
    <property type="project" value="SGD"/>
</dbReference>
<dbReference type="GO" id="GO:0042254">
    <property type="term" value="P:ribosome biogenesis"/>
    <property type="evidence" value="ECO:0007669"/>
    <property type="project" value="UniProtKB-KW"/>
</dbReference>
<dbReference type="GO" id="GO:0006415">
    <property type="term" value="P:translational termination"/>
    <property type="evidence" value="ECO:0000315"/>
    <property type="project" value="SGD"/>
</dbReference>
<dbReference type="CDD" id="cd12340">
    <property type="entry name" value="RBD_RRM1_NPL3"/>
    <property type="match status" value="1"/>
</dbReference>
<dbReference type="CDD" id="cd12339">
    <property type="entry name" value="RRM2_SRSF1_4_like"/>
    <property type="match status" value="1"/>
</dbReference>
<dbReference type="Gene3D" id="3.30.70.330">
    <property type="match status" value="2"/>
</dbReference>
<dbReference type="InterPro" id="IPR034166">
    <property type="entry name" value="Npl3_RRM1"/>
</dbReference>
<dbReference type="InterPro" id="IPR012677">
    <property type="entry name" value="Nucleotide-bd_a/b_plait_sf"/>
</dbReference>
<dbReference type="InterPro" id="IPR035979">
    <property type="entry name" value="RBD_domain_sf"/>
</dbReference>
<dbReference type="InterPro" id="IPR000504">
    <property type="entry name" value="RRM_dom"/>
</dbReference>
<dbReference type="InterPro" id="IPR050374">
    <property type="entry name" value="RRT5_SRSF_SR"/>
</dbReference>
<dbReference type="PANTHER" id="PTHR23003">
    <property type="entry name" value="RNA RECOGNITION MOTIF RRM DOMAIN CONTAINING PROTEIN"/>
    <property type="match status" value="1"/>
</dbReference>
<dbReference type="PANTHER" id="PTHR23003:SF62">
    <property type="entry name" value="SERINE_ARGININE (SR)-TYPE SHUTTLING MRNA BINDING PROTEIN NPL3"/>
    <property type="match status" value="1"/>
</dbReference>
<dbReference type="Pfam" id="PF00076">
    <property type="entry name" value="RRM_1"/>
    <property type="match status" value="2"/>
</dbReference>
<dbReference type="SMART" id="SM00360">
    <property type="entry name" value="RRM"/>
    <property type="match status" value="2"/>
</dbReference>
<dbReference type="SUPFAM" id="SSF54928">
    <property type="entry name" value="RNA-binding domain, RBD"/>
    <property type="match status" value="2"/>
</dbReference>
<dbReference type="PROSITE" id="PS50102">
    <property type="entry name" value="RRM"/>
    <property type="match status" value="2"/>
</dbReference>
<organism>
    <name type="scientific">Saccharomyces cerevisiae (strain ATCC 204508 / S288c)</name>
    <name type="common">Baker's yeast</name>
    <dbReference type="NCBI Taxonomy" id="559292"/>
    <lineage>
        <taxon>Eukaryota</taxon>
        <taxon>Fungi</taxon>
        <taxon>Dikarya</taxon>
        <taxon>Ascomycota</taxon>
        <taxon>Saccharomycotina</taxon>
        <taxon>Saccharomycetes</taxon>
        <taxon>Saccharomycetales</taxon>
        <taxon>Saccharomycetaceae</taxon>
        <taxon>Saccharomyces</taxon>
    </lineage>
</organism>
<proteinExistence type="evidence at protein level"/>
<keyword id="KW-0002">3D-structure</keyword>
<keyword id="KW-0963">Cytoplasm</keyword>
<keyword id="KW-0488">Methylation</keyword>
<keyword id="KW-0507">mRNA processing</keyword>
<keyword id="KW-0539">Nucleus</keyword>
<keyword id="KW-0597">Phosphoprotein</keyword>
<keyword id="KW-1185">Reference proteome</keyword>
<keyword id="KW-0677">Repeat</keyword>
<keyword id="KW-0687">Ribonucleoprotein</keyword>
<keyword id="KW-0690">Ribosome biogenesis</keyword>
<keyword id="KW-0694">RNA-binding</keyword>
<name>NOP3_YEAST</name>
<evidence type="ECO:0000255" key="1">
    <source>
        <dbReference type="PROSITE-ProRule" id="PRU00176"/>
    </source>
</evidence>
<evidence type="ECO:0000256" key="2">
    <source>
        <dbReference type="SAM" id="MobiDB-lite"/>
    </source>
</evidence>
<evidence type="ECO:0000269" key="3">
    <source>
    </source>
</evidence>
<evidence type="ECO:0000269" key="4">
    <source>
    </source>
</evidence>
<evidence type="ECO:0000269" key="5">
    <source>
    </source>
</evidence>
<evidence type="ECO:0000269" key="6">
    <source>
    </source>
</evidence>
<evidence type="ECO:0000269" key="7">
    <source>
    </source>
</evidence>
<evidence type="ECO:0000269" key="8">
    <source>
    </source>
</evidence>
<evidence type="ECO:0000269" key="9">
    <source>
    </source>
</evidence>
<evidence type="ECO:0000269" key="10">
    <source>
    </source>
</evidence>
<evidence type="ECO:0000269" key="11">
    <source>
    </source>
</evidence>
<evidence type="ECO:0000269" key="12">
    <source>
    </source>
</evidence>
<evidence type="ECO:0000269" key="13">
    <source>
    </source>
</evidence>
<evidence type="ECO:0000269" key="14">
    <source>
    </source>
</evidence>
<evidence type="ECO:0000269" key="15">
    <source>
    </source>
</evidence>
<evidence type="ECO:0000269" key="16">
    <source>
    </source>
</evidence>
<evidence type="ECO:0000269" key="17">
    <source>
    </source>
</evidence>
<evidence type="ECO:0000303" key="18">
    <source>
    </source>
</evidence>
<evidence type="ECO:0000303" key="19">
    <source>
    </source>
</evidence>
<evidence type="ECO:0000303" key="20">
    <source>
    </source>
</evidence>
<evidence type="ECO:0000303" key="21">
    <source>
    </source>
</evidence>
<evidence type="ECO:0000305" key="22"/>
<evidence type="ECO:0007744" key="23">
    <source>
        <dbReference type="PDB" id="2JD5"/>
    </source>
</evidence>
<evidence type="ECO:0007744" key="24">
    <source>
        <dbReference type="PDB" id="2JVO"/>
    </source>
</evidence>
<evidence type="ECO:0007744" key="25">
    <source>
        <dbReference type="PDB" id="2JVR"/>
    </source>
</evidence>
<evidence type="ECO:0007744" key="26">
    <source>
        <dbReference type="PDB" id="2OSQ"/>
    </source>
</evidence>
<evidence type="ECO:0007744" key="27">
    <source>
        <dbReference type="PDB" id="2OSR"/>
    </source>
</evidence>
<evidence type="ECO:0007744" key="28">
    <source>
    </source>
</evidence>
<evidence type="ECO:0007744" key="29">
    <source>
    </source>
</evidence>
<evidence type="ECO:0007744" key="30">
    <source>
    </source>
</evidence>
<evidence type="ECO:0007829" key="31">
    <source>
        <dbReference type="PDB" id="2JVO"/>
    </source>
</evidence>
<evidence type="ECO:0007829" key="32">
    <source>
        <dbReference type="PDB" id="2JVR"/>
    </source>
</evidence>
<evidence type="ECO:0007829" key="33">
    <source>
        <dbReference type="PDB" id="7QDE"/>
    </source>
</evidence>
<sequence>MSEAQETHVEQLPESVVDAPVEEQHQEPPQAPDAPQEPQVPQESAPQESAPQEPPAPQEQNDVPPPSNAPIYEGEESHSVQDYQEAHQHHQPPEPQPYYPPPPPGEHMHGRPPMHHRQEGELSNTRLFVRPFPLDVQESELNEIFGPFGPMKEVKILNGFAFVEFEEAESAAKAIEEVHGKSFANQPLEVVYSKLPAKRYRITMKNLPEGCSWQDLKDLARENSLETTFSSVNTRDFDGTGALEFPSEEILVEALERLNNIEFRGSVITVERDDNPPPIRRSNRGGFRGRGGFRGGFRGGFRGGFSRGGFGGPRGGFGGPRGGYGGYSRGGYGGYSRGGYGGSRGGYDSPRGGYDSPRGGYSRGGYGGPRNDYGPPRGSYGGSRGGYDGPRGDYGPPRDAYRTRDAPRERSPTR</sequence>
<protein>
    <recommendedName>
        <fullName evidence="22">Serine/arginine (SR)-type shuttling mRNA binding protein NPL3</fullName>
    </recommendedName>
    <alternativeName>
        <fullName evidence="21">Mitochondrial targeting suppressor 1 protein</fullName>
    </alternativeName>
    <alternativeName>
        <fullName evidence="20">Nuclear polyadenylated RNA-binding protein 1</fullName>
    </alternativeName>
    <alternativeName>
        <fullName evidence="18">Nuclear protein localization protein 3</fullName>
    </alternativeName>
    <alternativeName>
        <fullName evidence="22">Polyadenylate-binding protein NPL3</fullName>
    </alternativeName>
</protein>
<comment type="function">
    <text evidence="4 8 9 10 16">Involved in mRNA processing and export (PubMed:1429834, PubMed:15542855, PubMed:19061647, PubMed:8675010). Required for efficient splicing of a large set of pre-mRNAs by efficient co-transcriptional recruitment of the splicing machinery (PubMed:19061647, PubMed:23209445). Remains associated with the mRNP during early steps of translation elongation (PubMed:15542855).</text>
</comment>
<comment type="subunit">
    <text evidence="3">Interacts with RRP6.</text>
</comment>
<comment type="interaction">
    <interactant intactId="EBI-12114">
        <id>Q01560</id>
    </interactant>
    <interactant intactId="EBI-25083">
        <id>P40507</id>
        <label>AIR1</label>
    </interactant>
    <organismsDiffer>false</organismsDiffer>
    <experiments>3</experiments>
</comment>
<comment type="interaction">
    <interactant intactId="EBI-12114">
        <id>Q01560</id>
    </interactant>
    <interactant intactId="EBI-31385">
        <id>Q03862</id>
        <label>ARX1</label>
    </interactant>
    <organismsDiffer>false</organismsDiffer>
    <experiments>2</experiments>
</comment>
<comment type="interaction">
    <interactant intactId="EBI-12114">
        <id>Q01560</id>
    </interactant>
    <interactant intactId="EBI-7410">
        <id>P25555</id>
        <label>GBP2</label>
    </interactant>
    <organismsDiffer>false</organismsDiffer>
    <experiments>3</experiments>
</comment>
<comment type="interaction">
    <interactant intactId="EBI-12114">
        <id>Q01560</id>
    </interactant>
    <interactant intactId="EBI-8394">
        <id>P38074</id>
        <label>HMT1</label>
    </interactant>
    <organismsDiffer>false</organismsDiffer>
    <experiments>9</experiments>
</comment>
<comment type="interaction">
    <interactant intactId="EBI-12114">
        <id>Q01560</id>
    </interactant>
    <interactant intactId="EBI-12114">
        <id>Q01560</id>
        <label>NPL3</label>
    </interactant>
    <organismsDiffer>false</organismsDiffer>
    <experiments>3</experiments>
</comment>
<comment type="interaction">
    <interactant intactId="EBI-12114">
        <id>Q01560</id>
    </interactant>
    <interactant intactId="EBI-15308">
        <id>P04456</id>
        <label>RPL25</label>
    </interactant>
    <organismsDiffer>false</organismsDiffer>
    <experiments>2</experiments>
</comment>
<comment type="interaction">
    <interactant intactId="EBI-12114">
        <id>Q01560</id>
    </interactant>
    <interactant intactId="EBI-16219">
        <id>P39940</id>
        <label>RSP5</label>
    </interactant>
    <organismsDiffer>false</organismsDiffer>
    <experiments>2</experiments>
</comment>
<comment type="subcellular location">
    <subcellularLocation>
        <location evidence="7 17">Cytoplasm</location>
    </subcellularLocation>
    <subcellularLocation>
        <location evidence="5 7 15 17">Nucleus</location>
    </subcellularLocation>
    <subcellularLocation>
        <location evidence="13">Cytoplasm</location>
        <location evidence="13">Stress granule</location>
    </subcellularLocation>
    <text evidence="7 8 16">Nuclear at steady state and its import is mediated by the karyopherin MTR10 (PubMed:14676199, PubMed:15542855). Export is dependent on active transcription and the export of mRNAs in general (PubMed:14676199, PubMed:8675010).</text>
</comment>
<comment type="PTM">
    <text evidence="17">Methylated by HMT1. The methylation is required for nuclear export.</text>
</comment>
<comment type="miscellaneous">
    <text evidence="6">Present with 78700 molecules/cell in log phase SD medium.</text>
</comment>
<comment type="similarity">
    <text evidence="22">Belongs to the RRM GAR family.</text>
</comment>
<gene>
    <name evidence="18" type="primary">NPL3</name>
    <name type="synonym">MTR13</name>
    <name evidence="21" type="synonym">MTS1</name>
    <name evidence="20" type="synonym">NAB1</name>
    <name evidence="19" type="synonym">NOP3</name>
    <name type="ordered locus">YDR432W</name>
    <name type="ORF">D9461.19</name>
</gene>